<feature type="chain" id="PRO_1000014123" description="Ion-translocating oxidoreductase complex subunit G">
    <location>
        <begin position="1"/>
        <end position="215"/>
    </location>
</feature>
<feature type="transmembrane region" description="Helical" evidence="1">
    <location>
        <begin position="9"/>
        <end position="29"/>
    </location>
</feature>
<feature type="modified residue" description="FMN phosphoryl threonine" evidence="1">
    <location>
        <position position="176"/>
    </location>
</feature>
<reference key="1">
    <citation type="submission" date="2006-06" db="EMBL/GenBank/DDBJ databases">
        <title>Complete sequence of Pseudoalteromonas atlantica T6c.</title>
        <authorList>
            <consortium name="US DOE Joint Genome Institute"/>
            <person name="Copeland A."/>
            <person name="Lucas S."/>
            <person name="Lapidus A."/>
            <person name="Barry K."/>
            <person name="Detter J.C."/>
            <person name="Glavina del Rio T."/>
            <person name="Hammon N."/>
            <person name="Israni S."/>
            <person name="Dalin E."/>
            <person name="Tice H."/>
            <person name="Pitluck S."/>
            <person name="Saunders E."/>
            <person name="Brettin T."/>
            <person name="Bruce D."/>
            <person name="Han C."/>
            <person name="Tapia R."/>
            <person name="Gilna P."/>
            <person name="Schmutz J."/>
            <person name="Larimer F."/>
            <person name="Land M."/>
            <person name="Hauser L."/>
            <person name="Kyrpides N."/>
            <person name="Kim E."/>
            <person name="Karls A.C."/>
            <person name="Bartlett D."/>
            <person name="Higgins B.P."/>
            <person name="Richardson P."/>
        </authorList>
    </citation>
    <scope>NUCLEOTIDE SEQUENCE [LARGE SCALE GENOMIC DNA]</scope>
    <source>
        <strain>T6c / ATCC BAA-1087</strain>
    </source>
</reference>
<organism>
    <name type="scientific">Pseudoalteromonas atlantica (strain T6c / ATCC BAA-1087)</name>
    <dbReference type="NCBI Taxonomy" id="3042615"/>
    <lineage>
        <taxon>Bacteria</taxon>
        <taxon>Pseudomonadati</taxon>
        <taxon>Pseudomonadota</taxon>
        <taxon>Gammaproteobacteria</taxon>
        <taxon>Alteromonadales</taxon>
        <taxon>Alteromonadaceae</taxon>
        <taxon>Paraglaciecola</taxon>
    </lineage>
</organism>
<gene>
    <name evidence="1" type="primary">rnfG</name>
    <name type="ordered locus">Patl_2969</name>
</gene>
<comment type="function">
    <text evidence="1">Part of a membrane-bound complex that couples electron transfer with translocation of ions across the membrane.</text>
</comment>
<comment type="cofactor">
    <cofactor evidence="1">
        <name>FMN</name>
        <dbReference type="ChEBI" id="CHEBI:58210"/>
    </cofactor>
</comment>
<comment type="subunit">
    <text evidence="1">The complex is composed of six subunits: RnfA, RnfB, RnfC, RnfD, RnfE and RnfG.</text>
</comment>
<comment type="subcellular location">
    <subcellularLocation>
        <location evidence="1">Cell inner membrane</location>
        <topology evidence="1">Single-pass membrane protein</topology>
    </subcellularLocation>
</comment>
<comment type="similarity">
    <text evidence="1">Belongs to the RnfG family.</text>
</comment>
<protein>
    <recommendedName>
        <fullName evidence="1">Ion-translocating oxidoreductase complex subunit G</fullName>
        <ecNumber evidence="1">7.-.-.-</ecNumber>
    </recommendedName>
    <alternativeName>
        <fullName evidence="1">Rnf electron transport complex subunit G</fullName>
    </alternativeName>
</protein>
<accession>Q15RL1</accession>
<evidence type="ECO:0000255" key="1">
    <source>
        <dbReference type="HAMAP-Rule" id="MF_00479"/>
    </source>
</evidence>
<name>RNFG_PSEA6</name>
<proteinExistence type="inferred from homology"/>
<dbReference type="EC" id="7.-.-.-" evidence="1"/>
<dbReference type="EMBL" id="CP000388">
    <property type="protein sequence ID" value="ABG41477.1"/>
    <property type="molecule type" value="Genomic_DNA"/>
</dbReference>
<dbReference type="RefSeq" id="WP_011575729.1">
    <property type="nucleotide sequence ID" value="NC_008228.1"/>
</dbReference>
<dbReference type="SMR" id="Q15RL1"/>
<dbReference type="STRING" id="342610.Patl_2969"/>
<dbReference type="KEGG" id="pat:Patl_2969"/>
<dbReference type="eggNOG" id="COG4659">
    <property type="taxonomic scope" value="Bacteria"/>
</dbReference>
<dbReference type="HOGENOM" id="CLU_077882_1_0_6"/>
<dbReference type="OrthoDB" id="9784165at2"/>
<dbReference type="Proteomes" id="UP000001981">
    <property type="component" value="Chromosome"/>
</dbReference>
<dbReference type="GO" id="GO:0005886">
    <property type="term" value="C:plasma membrane"/>
    <property type="evidence" value="ECO:0007669"/>
    <property type="project" value="UniProtKB-SubCell"/>
</dbReference>
<dbReference type="GO" id="GO:0009055">
    <property type="term" value="F:electron transfer activity"/>
    <property type="evidence" value="ECO:0007669"/>
    <property type="project" value="InterPro"/>
</dbReference>
<dbReference type="GO" id="GO:0010181">
    <property type="term" value="F:FMN binding"/>
    <property type="evidence" value="ECO:0007669"/>
    <property type="project" value="InterPro"/>
</dbReference>
<dbReference type="GO" id="GO:0022900">
    <property type="term" value="P:electron transport chain"/>
    <property type="evidence" value="ECO:0007669"/>
    <property type="project" value="UniProtKB-UniRule"/>
</dbReference>
<dbReference type="HAMAP" id="MF_00479">
    <property type="entry name" value="RsxG_RnfG"/>
    <property type="match status" value="1"/>
</dbReference>
<dbReference type="InterPro" id="IPR007329">
    <property type="entry name" value="FMN-bd"/>
</dbReference>
<dbReference type="InterPro" id="IPR010209">
    <property type="entry name" value="Ion_transpt_RnfG/RsxG"/>
</dbReference>
<dbReference type="NCBIfam" id="NF002519">
    <property type="entry name" value="PRK01908.1"/>
    <property type="match status" value="1"/>
</dbReference>
<dbReference type="NCBIfam" id="TIGR01947">
    <property type="entry name" value="rnfG"/>
    <property type="match status" value="1"/>
</dbReference>
<dbReference type="PANTHER" id="PTHR36118">
    <property type="entry name" value="ION-TRANSLOCATING OXIDOREDUCTASE COMPLEX SUBUNIT G"/>
    <property type="match status" value="1"/>
</dbReference>
<dbReference type="PANTHER" id="PTHR36118:SF1">
    <property type="entry name" value="ION-TRANSLOCATING OXIDOREDUCTASE COMPLEX SUBUNIT G"/>
    <property type="match status" value="1"/>
</dbReference>
<dbReference type="Pfam" id="PF04205">
    <property type="entry name" value="FMN_bind"/>
    <property type="match status" value="1"/>
</dbReference>
<dbReference type="PIRSF" id="PIRSF006091">
    <property type="entry name" value="E_trnsport_RnfG"/>
    <property type="match status" value="1"/>
</dbReference>
<dbReference type="SMART" id="SM00900">
    <property type="entry name" value="FMN_bind"/>
    <property type="match status" value="1"/>
</dbReference>
<sequence>MKQIIAKNGLILSLFAIITSGLIALTYFGTQEQIELQRQQTLLAILDELVPRGSYDNLMQHDCVLVTSQAYLGSNSPQHIYRATRAGEPVAAVIEATAPNGYSGRIELVVGLSGDATVSGVRVIDHKETPGLGDKIDLRISDWVLGFNNQQLTQDNASNWAVKKDGGQFDQFTGATITPRAVVSAVKNTALYYQANKEAIFSASNECRSQLASQG</sequence>
<keyword id="KW-0997">Cell inner membrane</keyword>
<keyword id="KW-1003">Cell membrane</keyword>
<keyword id="KW-0249">Electron transport</keyword>
<keyword id="KW-0285">Flavoprotein</keyword>
<keyword id="KW-0288">FMN</keyword>
<keyword id="KW-0472">Membrane</keyword>
<keyword id="KW-0597">Phosphoprotein</keyword>
<keyword id="KW-1278">Translocase</keyword>
<keyword id="KW-0812">Transmembrane</keyword>
<keyword id="KW-1133">Transmembrane helix</keyword>
<keyword id="KW-0813">Transport</keyword>